<gene>
    <name evidence="1" type="primary">rplF</name>
    <name type="ordered locus">SAV2235</name>
</gene>
<accession>Q99S36</accession>
<sequence>MSRVGKKIIDIPSDVTVTFDGNHVTVKGPKGELSRTLNERMTFKQEENTIEVVRPSDSKEDRTNHGTTRALLNNMVQGVSQGYVKVLELVGVGYRAQMQGKDLILNVGYSHPVEIKAEENITFSVEKNTVVKVEGISKEQVGALASNIRSVRPPEPYKGKGIRYQGEYVRRKEGKTGK</sequence>
<dbReference type="EMBL" id="BA000017">
    <property type="protein sequence ID" value="BAB58397.1"/>
    <property type="molecule type" value="Genomic_DNA"/>
</dbReference>
<dbReference type="RefSeq" id="WP_000091975.1">
    <property type="nucleotide sequence ID" value="NC_002758.2"/>
</dbReference>
<dbReference type="SMR" id="Q99S36"/>
<dbReference type="KEGG" id="sav:SAV2235"/>
<dbReference type="HOGENOM" id="CLU_065464_1_2_9"/>
<dbReference type="PhylomeDB" id="Q99S36"/>
<dbReference type="Proteomes" id="UP000002481">
    <property type="component" value="Chromosome"/>
</dbReference>
<dbReference type="GO" id="GO:0022625">
    <property type="term" value="C:cytosolic large ribosomal subunit"/>
    <property type="evidence" value="ECO:0007669"/>
    <property type="project" value="TreeGrafter"/>
</dbReference>
<dbReference type="GO" id="GO:0019843">
    <property type="term" value="F:rRNA binding"/>
    <property type="evidence" value="ECO:0007669"/>
    <property type="project" value="UniProtKB-UniRule"/>
</dbReference>
<dbReference type="GO" id="GO:0003735">
    <property type="term" value="F:structural constituent of ribosome"/>
    <property type="evidence" value="ECO:0007669"/>
    <property type="project" value="InterPro"/>
</dbReference>
<dbReference type="GO" id="GO:0002181">
    <property type="term" value="P:cytoplasmic translation"/>
    <property type="evidence" value="ECO:0007669"/>
    <property type="project" value="TreeGrafter"/>
</dbReference>
<dbReference type="FunFam" id="3.90.930.12:FF:000001">
    <property type="entry name" value="50S ribosomal protein L6"/>
    <property type="match status" value="1"/>
</dbReference>
<dbReference type="FunFam" id="3.90.930.12:FF:000002">
    <property type="entry name" value="50S ribosomal protein L6"/>
    <property type="match status" value="1"/>
</dbReference>
<dbReference type="Gene3D" id="3.90.930.12">
    <property type="entry name" value="Ribosomal protein L6, alpha-beta domain"/>
    <property type="match status" value="2"/>
</dbReference>
<dbReference type="HAMAP" id="MF_01365_B">
    <property type="entry name" value="Ribosomal_uL6_B"/>
    <property type="match status" value="1"/>
</dbReference>
<dbReference type="InterPro" id="IPR000702">
    <property type="entry name" value="Ribosomal_uL6-like"/>
</dbReference>
<dbReference type="InterPro" id="IPR036789">
    <property type="entry name" value="Ribosomal_uL6-like_a/b-dom_sf"/>
</dbReference>
<dbReference type="InterPro" id="IPR020040">
    <property type="entry name" value="Ribosomal_uL6_a/b-dom"/>
</dbReference>
<dbReference type="InterPro" id="IPR019906">
    <property type="entry name" value="Ribosomal_uL6_bac-type"/>
</dbReference>
<dbReference type="InterPro" id="IPR002358">
    <property type="entry name" value="Ribosomal_uL6_CS"/>
</dbReference>
<dbReference type="NCBIfam" id="TIGR03654">
    <property type="entry name" value="L6_bact"/>
    <property type="match status" value="1"/>
</dbReference>
<dbReference type="PANTHER" id="PTHR11655">
    <property type="entry name" value="60S/50S RIBOSOMAL PROTEIN L6/L9"/>
    <property type="match status" value="1"/>
</dbReference>
<dbReference type="PANTHER" id="PTHR11655:SF14">
    <property type="entry name" value="LARGE RIBOSOMAL SUBUNIT PROTEIN UL6M"/>
    <property type="match status" value="1"/>
</dbReference>
<dbReference type="Pfam" id="PF00347">
    <property type="entry name" value="Ribosomal_L6"/>
    <property type="match status" value="2"/>
</dbReference>
<dbReference type="PIRSF" id="PIRSF002162">
    <property type="entry name" value="Ribosomal_L6"/>
    <property type="match status" value="1"/>
</dbReference>
<dbReference type="PRINTS" id="PR00059">
    <property type="entry name" value="RIBOSOMALL6"/>
</dbReference>
<dbReference type="SUPFAM" id="SSF56053">
    <property type="entry name" value="Ribosomal protein L6"/>
    <property type="match status" value="2"/>
</dbReference>
<dbReference type="PROSITE" id="PS00525">
    <property type="entry name" value="RIBOSOMAL_L6_1"/>
    <property type="match status" value="1"/>
</dbReference>
<name>RL6_STAAM</name>
<keyword id="KW-0687">Ribonucleoprotein</keyword>
<keyword id="KW-0689">Ribosomal protein</keyword>
<keyword id="KW-0694">RNA-binding</keyword>
<keyword id="KW-0699">rRNA-binding</keyword>
<comment type="function">
    <text evidence="1">This protein binds to the 23S rRNA, and is important in its secondary structure. It is located near the subunit interface in the base of the L7/L12 stalk, and near the tRNA binding site of the peptidyltransferase center.</text>
</comment>
<comment type="subunit">
    <text evidence="1">Part of the 50S ribosomal subunit.</text>
</comment>
<comment type="similarity">
    <text evidence="1">Belongs to the universal ribosomal protein uL6 family.</text>
</comment>
<protein>
    <recommendedName>
        <fullName evidence="1">Large ribosomal subunit protein uL6</fullName>
    </recommendedName>
    <alternativeName>
        <fullName evidence="2">50S ribosomal protein L6</fullName>
    </alternativeName>
</protein>
<feature type="chain" id="PRO_0000223985" description="Large ribosomal subunit protein uL6">
    <location>
        <begin position="1"/>
        <end position="178"/>
    </location>
</feature>
<organism>
    <name type="scientific">Staphylococcus aureus (strain Mu50 / ATCC 700699)</name>
    <dbReference type="NCBI Taxonomy" id="158878"/>
    <lineage>
        <taxon>Bacteria</taxon>
        <taxon>Bacillati</taxon>
        <taxon>Bacillota</taxon>
        <taxon>Bacilli</taxon>
        <taxon>Bacillales</taxon>
        <taxon>Staphylococcaceae</taxon>
        <taxon>Staphylococcus</taxon>
    </lineage>
</organism>
<proteinExistence type="inferred from homology"/>
<reference key="1">
    <citation type="journal article" date="2001" name="Lancet">
        <title>Whole genome sequencing of meticillin-resistant Staphylococcus aureus.</title>
        <authorList>
            <person name="Kuroda M."/>
            <person name="Ohta T."/>
            <person name="Uchiyama I."/>
            <person name="Baba T."/>
            <person name="Yuzawa H."/>
            <person name="Kobayashi I."/>
            <person name="Cui L."/>
            <person name="Oguchi A."/>
            <person name="Aoki K."/>
            <person name="Nagai Y."/>
            <person name="Lian J.-Q."/>
            <person name="Ito T."/>
            <person name="Kanamori M."/>
            <person name="Matsumaru H."/>
            <person name="Maruyama A."/>
            <person name="Murakami H."/>
            <person name="Hosoyama A."/>
            <person name="Mizutani-Ui Y."/>
            <person name="Takahashi N.K."/>
            <person name="Sawano T."/>
            <person name="Inoue R."/>
            <person name="Kaito C."/>
            <person name="Sekimizu K."/>
            <person name="Hirakawa H."/>
            <person name="Kuhara S."/>
            <person name="Goto S."/>
            <person name="Yabuzaki J."/>
            <person name="Kanehisa M."/>
            <person name="Yamashita A."/>
            <person name="Oshima K."/>
            <person name="Furuya K."/>
            <person name="Yoshino C."/>
            <person name="Shiba T."/>
            <person name="Hattori M."/>
            <person name="Ogasawara N."/>
            <person name="Hayashi H."/>
            <person name="Hiramatsu K."/>
        </authorList>
    </citation>
    <scope>NUCLEOTIDE SEQUENCE [LARGE SCALE GENOMIC DNA]</scope>
    <source>
        <strain>Mu50 / ATCC 700699</strain>
    </source>
</reference>
<evidence type="ECO:0000255" key="1">
    <source>
        <dbReference type="HAMAP-Rule" id="MF_01365"/>
    </source>
</evidence>
<evidence type="ECO:0000305" key="2"/>